<gene>
    <name type="ordered locus">SE_1711</name>
</gene>
<sequence length="174" mass="19153">MRDLQQLLDELKDMSFFNPGEMCIIGCSTSEVIGKRIGSVGSMDVAKEIYENLKQLEIDTGVTFAFQGCEHINRAVTIERANFNPLTMEEVTVVPDVHAGGSLSTYAYQQMEDPIVVEHITVSKGIDIGQTLIGMHIKHVCVPVRTSVKQIGEAIVTIATSRPKKIGGERAKYQ</sequence>
<feature type="chain" id="PRO_0000213016" description="UPF0340 protein SE_1711">
    <location>
        <begin position="1"/>
        <end position="174"/>
    </location>
</feature>
<protein>
    <recommendedName>
        <fullName evidence="1">UPF0340 protein SE_1711</fullName>
    </recommendedName>
</protein>
<comment type="similarity">
    <text evidence="1">Belongs to the UPF0340 family.</text>
</comment>
<dbReference type="EMBL" id="AE015929">
    <property type="protein sequence ID" value="AAO05310.1"/>
    <property type="molecule type" value="Genomic_DNA"/>
</dbReference>
<dbReference type="RefSeq" id="NP_765266.1">
    <property type="nucleotide sequence ID" value="NC_004461.1"/>
</dbReference>
<dbReference type="RefSeq" id="WP_001829927.1">
    <property type="nucleotide sequence ID" value="NZ_WBME01000021.1"/>
</dbReference>
<dbReference type="SMR" id="Q8CRN2"/>
<dbReference type="KEGG" id="sep:SE_1711"/>
<dbReference type="PATRIC" id="fig|176280.10.peg.1672"/>
<dbReference type="eggNOG" id="COG4475">
    <property type="taxonomic scope" value="Bacteria"/>
</dbReference>
<dbReference type="HOGENOM" id="CLU_106658_0_0_9"/>
<dbReference type="OrthoDB" id="9803187at2"/>
<dbReference type="Proteomes" id="UP000001411">
    <property type="component" value="Chromosome"/>
</dbReference>
<dbReference type="Gene3D" id="3.40.50.10360">
    <property type="entry name" value="Hypothetical protein TT1679"/>
    <property type="match status" value="1"/>
</dbReference>
<dbReference type="HAMAP" id="MF_00800">
    <property type="entry name" value="UPF0340"/>
    <property type="match status" value="1"/>
</dbReference>
<dbReference type="InterPro" id="IPR028345">
    <property type="entry name" value="Antibiotic_NAT-like"/>
</dbReference>
<dbReference type="InterPro" id="IPR006340">
    <property type="entry name" value="DUF436"/>
</dbReference>
<dbReference type="NCBIfam" id="TIGR01440">
    <property type="entry name" value="TIGR01440 family protein"/>
    <property type="match status" value="1"/>
</dbReference>
<dbReference type="Pfam" id="PF04260">
    <property type="entry name" value="DUF436"/>
    <property type="match status" value="1"/>
</dbReference>
<dbReference type="PIRSF" id="PIRSF007510">
    <property type="entry name" value="UCP007510"/>
    <property type="match status" value="1"/>
</dbReference>
<dbReference type="SUPFAM" id="SSF110710">
    <property type="entry name" value="TTHA0583/YokD-like"/>
    <property type="match status" value="1"/>
</dbReference>
<name>Y1711_STAES</name>
<accession>Q8CRN2</accession>
<organism>
    <name type="scientific">Staphylococcus epidermidis (strain ATCC 12228 / FDA PCI 1200)</name>
    <dbReference type="NCBI Taxonomy" id="176280"/>
    <lineage>
        <taxon>Bacteria</taxon>
        <taxon>Bacillati</taxon>
        <taxon>Bacillota</taxon>
        <taxon>Bacilli</taxon>
        <taxon>Bacillales</taxon>
        <taxon>Staphylococcaceae</taxon>
        <taxon>Staphylococcus</taxon>
    </lineage>
</organism>
<evidence type="ECO:0000255" key="1">
    <source>
        <dbReference type="HAMAP-Rule" id="MF_00800"/>
    </source>
</evidence>
<proteinExistence type="inferred from homology"/>
<reference key="1">
    <citation type="journal article" date="2003" name="Mol. Microbiol.">
        <title>Genome-based analysis of virulence genes in a non-biofilm-forming Staphylococcus epidermidis strain (ATCC 12228).</title>
        <authorList>
            <person name="Zhang Y.-Q."/>
            <person name="Ren S.-X."/>
            <person name="Li H.-L."/>
            <person name="Wang Y.-X."/>
            <person name="Fu G."/>
            <person name="Yang J."/>
            <person name="Qin Z.-Q."/>
            <person name="Miao Y.-G."/>
            <person name="Wang W.-Y."/>
            <person name="Chen R.-S."/>
            <person name="Shen Y."/>
            <person name="Chen Z."/>
            <person name="Yuan Z.-H."/>
            <person name="Zhao G.-P."/>
            <person name="Qu D."/>
            <person name="Danchin A."/>
            <person name="Wen Y.-M."/>
        </authorList>
    </citation>
    <scope>NUCLEOTIDE SEQUENCE [LARGE SCALE GENOMIC DNA]</scope>
    <source>
        <strain>ATCC 12228 / FDA PCI 1200</strain>
    </source>
</reference>